<proteinExistence type="inferred from homology"/>
<organism>
    <name type="scientific">Escherichia coli (strain SE11)</name>
    <dbReference type="NCBI Taxonomy" id="409438"/>
    <lineage>
        <taxon>Bacteria</taxon>
        <taxon>Pseudomonadati</taxon>
        <taxon>Pseudomonadota</taxon>
        <taxon>Gammaproteobacteria</taxon>
        <taxon>Enterobacterales</taxon>
        <taxon>Enterobacteriaceae</taxon>
        <taxon>Escherichia</taxon>
    </lineage>
</organism>
<name>FMT_ECOSE</name>
<comment type="function">
    <text evidence="1">Attaches a formyl group to the free amino group of methionyl-tRNA(fMet). The formyl group appears to play a dual role in the initiator identity of N-formylmethionyl-tRNA by promoting its recognition by IF2 and preventing the misappropriation of this tRNA by the elongation apparatus.</text>
</comment>
<comment type="catalytic activity">
    <reaction evidence="1">
        <text>L-methionyl-tRNA(fMet) + (6R)-10-formyltetrahydrofolate = N-formyl-L-methionyl-tRNA(fMet) + (6S)-5,6,7,8-tetrahydrofolate + H(+)</text>
        <dbReference type="Rhea" id="RHEA:24380"/>
        <dbReference type="Rhea" id="RHEA-COMP:9952"/>
        <dbReference type="Rhea" id="RHEA-COMP:9953"/>
        <dbReference type="ChEBI" id="CHEBI:15378"/>
        <dbReference type="ChEBI" id="CHEBI:57453"/>
        <dbReference type="ChEBI" id="CHEBI:78530"/>
        <dbReference type="ChEBI" id="CHEBI:78844"/>
        <dbReference type="ChEBI" id="CHEBI:195366"/>
        <dbReference type="EC" id="2.1.2.9"/>
    </reaction>
</comment>
<comment type="similarity">
    <text evidence="1">Belongs to the Fmt family.</text>
</comment>
<accession>B6I201</accession>
<sequence length="315" mass="34184">MSESLRIIFAGTPDFAARHLDALLSSGHNVVSVFTQPDRPAGRGKKLMPSPVKVLAEEKGLPVFQPVSLRPQENQQLVADLQADVMVVVAYGLILPKAVLEMPRLGCINVHGSLLPRWRGAAPIQRSLWAGDAETGVTIMQMDVGLDTGDMLYKLSCPITAEDTSGTLYDKLAELGPQGLITTLKQLADGTAKPEVQDETLVTYAEKLSKEEARIDWSLSAAQLERCIRAFNPWPMSWLEIEGQPVKVWKASVIDTATNAAPGTILEANKQGIQVATGDGILNLLSLQPAGKKAMSAQDLLNSRREWFVPGNRLV</sequence>
<gene>
    <name evidence="1" type="primary">fmt</name>
    <name type="ordered locus">ECSE_3562</name>
</gene>
<keyword id="KW-0648">Protein biosynthesis</keyword>
<keyword id="KW-0808">Transferase</keyword>
<evidence type="ECO:0000255" key="1">
    <source>
        <dbReference type="HAMAP-Rule" id="MF_00182"/>
    </source>
</evidence>
<protein>
    <recommendedName>
        <fullName evidence="1">Methionyl-tRNA formyltransferase</fullName>
        <ecNumber evidence="1">2.1.2.9</ecNumber>
    </recommendedName>
</protein>
<feature type="chain" id="PRO_1000098402" description="Methionyl-tRNA formyltransferase">
    <location>
        <begin position="1"/>
        <end position="315"/>
    </location>
</feature>
<feature type="binding site" evidence="1">
    <location>
        <begin position="113"/>
        <end position="116"/>
    </location>
    <ligand>
        <name>(6S)-5,6,7,8-tetrahydrofolate</name>
        <dbReference type="ChEBI" id="CHEBI:57453"/>
    </ligand>
</feature>
<dbReference type="EC" id="2.1.2.9" evidence="1"/>
<dbReference type="EMBL" id="AP009240">
    <property type="protein sequence ID" value="BAG79086.1"/>
    <property type="molecule type" value="Genomic_DNA"/>
</dbReference>
<dbReference type="RefSeq" id="WP_000004479.1">
    <property type="nucleotide sequence ID" value="NC_011415.1"/>
</dbReference>
<dbReference type="SMR" id="B6I201"/>
<dbReference type="KEGG" id="ecy:ECSE_3562"/>
<dbReference type="HOGENOM" id="CLU_033347_1_2_6"/>
<dbReference type="Proteomes" id="UP000008199">
    <property type="component" value="Chromosome"/>
</dbReference>
<dbReference type="GO" id="GO:0005829">
    <property type="term" value="C:cytosol"/>
    <property type="evidence" value="ECO:0007669"/>
    <property type="project" value="TreeGrafter"/>
</dbReference>
<dbReference type="GO" id="GO:0004479">
    <property type="term" value="F:methionyl-tRNA formyltransferase activity"/>
    <property type="evidence" value="ECO:0007669"/>
    <property type="project" value="UniProtKB-UniRule"/>
</dbReference>
<dbReference type="CDD" id="cd08646">
    <property type="entry name" value="FMT_core_Met-tRNA-FMT_N"/>
    <property type="match status" value="1"/>
</dbReference>
<dbReference type="CDD" id="cd08704">
    <property type="entry name" value="Met_tRNA_FMT_C"/>
    <property type="match status" value="1"/>
</dbReference>
<dbReference type="FunFam" id="3.10.25.10:FF:000001">
    <property type="entry name" value="Methionyl-tRNA formyltransferase"/>
    <property type="match status" value="1"/>
</dbReference>
<dbReference type="FunFam" id="3.40.50.170:FF:000003">
    <property type="entry name" value="Methionyl-tRNA formyltransferase"/>
    <property type="match status" value="1"/>
</dbReference>
<dbReference type="Gene3D" id="3.10.25.10">
    <property type="entry name" value="Formyl transferase, C-terminal domain"/>
    <property type="match status" value="1"/>
</dbReference>
<dbReference type="Gene3D" id="3.40.50.170">
    <property type="entry name" value="Formyl transferase, N-terminal domain"/>
    <property type="match status" value="1"/>
</dbReference>
<dbReference type="HAMAP" id="MF_00182">
    <property type="entry name" value="Formyl_trans"/>
    <property type="match status" value="1"/>
</dbReference>
<dbReference type="InterPro" id="IPR005794">
    <property type="entry name" value="Fmt"/>
</dbReference>
<dbReference type="InterPro" id="IPR005793">
    <property type="entry name" value="Formyl_trans_C"/>
</dbReference>
<dbReference type="InterPro" id="IPR037022">
    <property type="entry name" value="Formyl_trans_C_sf"/>
</dbReference>
<dbReference type="InterPro" id="IPR002376">
    <property type="entry name" value="Formyl_transf_N"/>
</dbReference>
<dbReference type="InterPro" id="IPR036477">
    <property type="entry name" value="Formyl_transf_N_sf"/>
</dbReference>
<dbReference type="InterPro" id="IPR011034">
    <property type="entry name" value="Formyl_transferase-like_C_sf"/>
</dbReference>
<dbReference type="InterPro" id="IPR001555">
    <property type="entry name" value="GART_AS"/>
</dbReference>
<dbReference type="InterPro" id="IPR044135">
    <property type="entry name" value="Met-tRNA-FMT_C"/>
</dbReference>
<dbReference type="InterPro" id="IPR041711">
    <property type="entry name" value="Met-tRNA-FMT_N"/>
</dbReference>
<dbReference type="NCBIfam" id="TIGR00460">
    <property type="entry name" value="fmt"/>
    <property type="match status" value="1"/>
</dbReference>
<dbReference type="PANTHER" id="PTHR11138">
    <property type="entry name" value="METHIONYL-TRNA FORMYLTRANSFERASE"/>
    <property type="match status" value="1"/>
</dbReference>
<dbReference type="PANTHER" id="PTHR11138:SF5">
    <property type="entry name" value="METHIONYL-TRNA FORMYLTRANSFERASE, MITOCHONDRIAL"/>
    <property type="match status" value="1"/>
</dbReference>
<dbReference type="Pfam" id="PF02911">
    <property type="entry name" value="Formyl_trans_C"/>
    <property type="match status" value="1"/>
</dbReference>
<dbReference type="Pfam" id="PF00551">
    <property type="entry name" value="Formyl_trans_N"/>
    <property type="match status" value="1"/>
</dbReference>
<dbReference type="SUPFAM" id="SSF50486">
    <property type="entry name" value="FMT C-terminal domain-like"/>
    <property type="match status" value="1"/>
</dbReference>
<dbReference type="SUPFAM" id="SSF53328">
    <property type="entry name" value="Formyltransferase"/>
    <property type="match status" value="1"/>
</dbReference>
<dbReference type="PROSITE" id="PS00373">
    <property type="entry name" value="GART"/>
    <property type="match status" value="1"/>
</dbReference>
<reference key="1">
    <citation type="journal article" date="2008" name="DNA Res.">
        <title>Complete genome sequence and comparative analysis of the wild-type commensal Escherichia coli strain SE11 isolated from a healthy adult.</title>
        <authorList>
            <person name="Oshima K."/>
            <person name="Toh H."/>
            <person name="Ogura Y."/>
            <person name="Sasamoto H."/>
            <person name="Morita H."/>
            <person name="Park S.-H."/>
            <person name="Ooka T."/>
            <person name="Iyoda S."/>
            <person name="Taylor T.D."/>
            <person name="Hayashi T."/>
            <person name="Itoh K."/>
            <person name="Hattori M."/>
        </authorList>
    </citation>
    <scope>NUCLEOTIDE SEQUENCE [LARGE SCALE GENOMIC DNA]</scope>
    <source>
        <strain>SE11</strain>
    </source>
</reference>